<feature type="chain" id="PRO_1000004526" description="Translation initiation factor IF-3">
    <location>
        <begin position="1"/>
        <end position="203"/>
    </location>
</feature>
<feature type="region of interest" description="Disordered" evidence="2">
    <location>
        <begin position="168"/>
        <end position="203"/>
    </location>
</feature>
<feature type="compositionally biased region" description="Basic and acidic residues" evidence="2">
    <location>
        <begin position="193"/>
        <end position="203"/>
    </location>
</feature>
<comment type="function">
    <text evidence="1">IF-3 binds to the 30S ribosomal subunit and shifts the equilibrium between 70S ribosomes and their 50S and 30S subunits in favor of the free subunits, thus enhancing the availability of 30S subunits on which protein synthesis initiation begins.</text>
</comment>
<comment type="subunit">
    <text evidence="1">Monomer.</text>
</comment>
<comment type="subcellular location">
    <subcellularLocation>
        <location evidence="1">Cytoplasm</location>
    </subcellularLocation>
</comment>
<comment type="similarity">
    <text evidence="1">Belongs to the IF-3 family.</text>
</comment>
<reference key="1">
    <citation type="journal article" date="2005" name="Science">
        <title>Extensive DNA inversions in the B. fragilis genome control variable gene expression.</title>
        <authorList>
            <person name="Cerdeno-Tarraga A.-M."/>
            <person name="Patrick S."/>
            <person name="Crossman L.C."/>
            <person name="Blakely G."/>
            <person name="Abratt V."/>
            <person name="Lennard N."/>
            <person name="Poxton I."/>
            <person name="Duerden B."/>
            <person name="Harris B."/>
            <person name="Quail M.A."/>
            <person name="Barron A."/>
            <person name="Clark L."/>
            <person name="Corton C."/>
            <person name="Doggett J."/>
            <person name="Holden M.T.G."/>
            <person name="Larke N."/>
            <person name="Line A."/>
            <person name="Lord A."/>
            <person name="Norbertczak H."/>
            <person name="Ormond D."/>
            <person name="Price C."/>
            <person name="Rabbinowitsch E."/>
            <person name="Woodward J."/>
            <person name="Barrell B.G."/>
            <person name="Parkhill J."/>
        </authorList>
    </citation>
    <scope>NUCLEOTIDE SEQUENCE [LARGE SCALE GENOMIC DNA]</scope>
    <source>
        <strain>ATCC 25285 / DSM 2151 / CCUG 4856 / JCM 11019 / LMG 10263 / NCTC 9343 / Onslow / VPI 2553 / EN-2</strain>
    </source>
</reference>
<name>IF3_BACFN</name>
<organism>
    <name type="scientific">Bacteroides fragilis (strain ATCC 25285 / DSM 2151 / CCUG 4856 / JCM 11019 / LMG 10263 / NCTC 9343 / Onslow / VPI 2553 / EN-2)</name>
    <dbReference type="NCBI Taxonomy" id="272559"/>
    <lineage>
        <taxon>Bacteria</taxon>
        <taxon>Pseudomonadati</taxon>
        <taxon>Bacteroidota</taxon>
        <taxon>Bacteroidia</taxon>
        <taxon>Bacteroidales</taxon>
        <taxon>Bacteroidaceae</taxon>
        <taxon>Bacteroides</taxon>
    </lineage>
</organism>
<dbReference type="EMBL" id="CR626927">
    <property type="protein sequence ID" value="CAH07395.1"/>
    <property type="molecule type" value="Genomic_DNA"/>
</dbReference>
<dbReference type="RefSeq" id="WP_008768315.1">
    <property type="nucleotide sequence ID" value="NZ_UFTH01000001.1"/>
</dbReference>
<dbReference type="SMR" id="Q5LEQ5"/>
<dbReference type="PaxDb" id="272559-BF9343_1614"/>
<dbReference type="GeneID" id="60369819"/>
<dbReference type="KEGG" id="bfs:BF9343_1614"/>
<dbReference type="eggNOG" id="COG0290">
    <property type="taxonomic scope" value="Bacteria"/>
</dbReference>
<dbReference type="HOGENOM" id="CLU_054919_3_0_10"/>
<dbReference type="Proteomes" id="UP000006731">
    <property type="component" value="Chromosome"/>
</dbReference>
<dbReference type="GO" id="GO:0005829">
    <property type="term" value="C:cytosol"/>
    <property type="evidence" value="ECO:0007669"/>
    <property type="project" value="TreeGrafter"/>
</dbReference>
<dbReference type="GO" id="GO:0016020">
    <property type="term" value="C:membrane"/>
    <property type="evidence" value="ECO:0007669"/>
    <property type="project" value="TreeGrafter"/>
</dbReference>
<dbReference type="GO" id="GO:0043022">
    <property type="term" value="F:ribosome binding"/>
    <property type="evidence" value="ECO:0007669"/>
    <property type="project" value="TreeGrafter"/>
</dbReference>
<dbReference type="GO" id="GO:0003743">
    <property type="term" value="F:translation initiation factor activity"/>
    <property type="evidence" value="ECO:0007669"/>
    <property type="project" value="UniProtKB-UniRule"/>
</dbReference>
<dbReference type="GO" id="GO:0032790">
    <property type="term" value="P:ribosome disassembly"/>
    <property type="evidence" value="ECO:0007669"/>
    <property type="project" value="TreeGrafter"/>
</dbReference>
<dbReference type="FunFam" id="3.10.20.80:FF:000001">
    <property type="entry name" value="Translation initiation factor IF-3"/>
    <property type="match status" value="1"/>
</dbReference>
<dbReference type="FunFam" id="3.30.110.10:FF:000001">
    <property type="entry name" value="Translation initiation factor IF-3"/>
    <property type="match status" value="1"/>
</dbReference>
<dbReference type="Gene3D" id="3.30.110.10">
    <property type="entry name" value="Translation initiation factor 3 (IF-3), C-terminal domain"/>
    <property type="match status" value="1"/>
</dbReference>
<dbReference type="Gene3D" id="3.10.20.80">
    <property type="entry name" value="Translation initiation factor 3 (IF-3), N-terminal domain"/>
    <property type="match status" value="1"/>
</dbReference>
<dbReference type="HAMAP" id="MF_00080">
    <property type="entry name" value="IF_3"/>
    <property type="match status" value="1"/>
</dbReference>
<dbReference type="InterPro" id="IPR036788">
    <property type="entry name" value="T_IF-3_C_sf"/>
</dbReference>
<dbReference type="InterPro" id="IPR036787">
    <property type="entry name" value="T_IF-3_N_sf"/>
</dbReference>
<dbReference type="InterPro" id="IPR019813">
    <property type="entry name" value="Translation_initiation_fac3_CS"/>
</dbReference>
<dbReference type="InterPro" id="IPR001288">
    <property type="entry name" value="Translation_initiation_fac_3"/>
</dbReference>
<dbReference type="InterPro" id="IPR019815">
    <property type="entry name" value="Translation_initiation_fac_3_C"/>
</dbReference>
<dbReference type="InterPro" id="IPR019814">
    <property type="entry name" value="Translation_initiation_fac_3_N"/>
</dbReference>
<dbReference type="NCBIfam" id="TIGR00168">
    <property type="entry name" value="infC"/>
    <property type="match status" value="1"/>
</dbReference>
<dbReference type="PANTHER" id="PTHR10938">
    <property type="entry name" value="TRANSLATION INITIATION FACTOR IF-3"/>
    <property type="match status" value="1"/>
</dbReference>
<dbReference type="PANTHER" id="PTHR10938:SF0">
    <property type="entry name" value="TRANSLATION INITIATION FACTOR IF-3, MITOCHONDRIAL"/>
    <property type="match status" value="1"/>
</dbReference>
<dbReference type="Pfam" id="PF00707">
    <property type="entry name" value="IF3_C"/>
    <property type="match status" value="1"/>
</dbReference>
<dbReference type="Pfam" id="PF05198">
    <property type="entry name" value="IF3_N"/>
    <property type="match status" value="1"/>
</dbReference>
<dbReference type="SUPFAM" id="SSF55200">
    <property type="entry name" value="Translation initiation factor IF3, C-terminal domain"/>
    <property type="match status" value="1"/>
</dbReference>
<dbReference type="SUPFAM" id="SSF54364">
    <property type="entry name" value="Translation initiation factor IF3, N-terminal domain"/>
    <property type="match status" value="1"/>
</dbReference>
<dbReference type="PROSITE" id="PS00938">
    <property type="entry name" value="IF3"/>
    <property type="match status" value="1"/>
</dbReference>
<accession>Q5LEQ5</accession>
<proteinExistence type="inferred from homology"/>
<sequence length="203" mass="23307">MKNDSMKSQYRINEQIRAKEVRIVGDDVEPKVYPIFQALKLAEEKELDLVEISPNAQPPVCRIIDYSKFLYQLKKRQKEQKAKQVKVNVKEIRFGPQTDDHDYNFKLKHAKGFLEDGDKVKAYVFFKGRSILFKEQGEVLLLRFANDLEDYAKVDQLPVLEGKRMTIQLSPKKKESATKKPATPKPATPAAVKAEKPAGDNEE</sequence>
<keyword id="KW-0963">Cytoplasm</keyword>
<keyword id="KW-0396">Initiation factor</keyword>
<keyword id="KW-0648">Protein biosynthesis</keyword>
<gene>
    <name evidence="1" type="primary">infC</name>
    <name type="ordered locus">BF1695</name>
</gene>
<evidence type="ECO:0000255" key="1">
    <source>
        <dbReference type="HAMAP-Rule" id="MF_00080"/>
    </source>
</evidence>
<evidence type="ECO:0000256" key="2">
    <source>
        <dbReference type="SAM" id="MobiDB-lite"/>
    </source>
</evidence>
<protein>
    <recommendedName>
        <fullName evidence="1">Translation initiation factor IF-3</fullName>
    </recommendedName>
</protein>